<keyword id="KW-0963">Cytoplasm</keyword>
<keyword id="KW-0488">Methylation</keyword>
<keyword id="KW-0648">Protein biosynthesis</keyword>
<keyword id="KW-1185">Reference proteome</keyword>
<comment type="function">
    <text evidence="1">Peptide chain release factor 1 directs the termination of translation in response to the peptide chain termination codons UAG and UAA.</text>
</comment>
<comment type="subcellular location">
    <subcellularLocation>
        <location evidence="1">Cytoplasm</location>
    </subcellularLocation>
</comment>
<comment type="PTM">
    <text evidence="1">Methylated by PrmC. Methylation increases the termination efficiency of RF1.</text>
</comment>
<comment type="similarity">
    <text evidence="1">Belongs to the prokaryotic/mitochondrial release factor family.</text>
</comment>
<organism>
    <name type="scientific">Paracoccus denitrificans (strain Pd 1222)</name>
    <dbReference type="NCBI Taxonomy" id="318586"/>
    <lineage>
        <taxon>Bacteria</taxon>
        <taxon>Pseudomonadati</taxon>
        <taxon>Pseudomonadota</taxon>
        <taxon>Alphaproteobacteria</taxon>
        <taxon>Rhodobacterales</taxon>
        <taxon>Paracoccaceae</taxon>
        <taxon>Paracoccus</taxon>
    </lineage>
</organism>
<evidence type="ECO:0000255" key="1">
    <source>
        <dbReference type="HAMAP-Rule" id="MF_00093"/>
    </source>
</evidence>
<evidence type="ECO:0000256" key="2">
    <source>
        <dbReference type="SAM" id="MobiDB-lite"/>
    </source>
</evidence>
<dbReference type="EMBL" id="CP000489">
    <property type="protein sequence ID" value="ABL69005.1"/>
    <property type="molecule type" value="Genomic_DNA"/>
</dbReference>
<dbReference type="RefSeq" id="WP_011747233.1">
    <property type="nucleotide sequence ID" value="NC_008686.1"/>
</dbReference>
<dbReference type="SMR" id="A1B0G1"/>
<dbReference type="STRING" id="318586.Pden_0894"/>
<dbReference type="EnsemblBacteria" id="ABL69005">
    <property type="protein sequence ID" value="ABL69005"/>
    <property type="gene ID" value="Pden_0894"/>
</dbReference>
<dbReference type="GeneID" id="93452116"/>
<dbReference type="KEGG" id="pde:Pden_0894"/>
<dbReference type="eggNOG" id="COG0216">
    <property type="taxonomic scope" value="Bacteria"/>
</dbReference>
<dbReference type="HOGENOM" id="CLU_036856_0_1_5"/>
<dbReference type="OrthoDB" id="9806673at2"/>
<dbReference type="Proteomes" id="UP000000361">
    <property type="component" value="Chromosome 1"/>
</dbReference>
<dbReference type="GO" id="GO:0005737">
    <property type="term" value="C:cytoplasm"/>
    <property type="evidence" value="ECO:0007669"/>
    <property type="project" value="UniProtKB-SubCell"/>
</dbReference>
<dbReference type="GO" id="GO:0016149">
    <property type="term" value="F:translation release factor activity, codon specific"/>
    <property type="evidence" value="ECO:0007669"/>
    <property type="project" value="UniProtKB-UniRule"/>
</dbReference>
<dbReference type="FunFam" id="3.30.160.20:FF:000004">
    <property type="entry name" value="Peptide chain release factor 1"/>
    <property type="match status" value="1"/>
</dbReference>
<dbReference type="FunFam" id="3.30.70.1660:FF:000002">
    <property type="entry name" value="Peptide chain release factor 1"/>
    <property type="match status" value="1"/>
</dbReference>
<dbReference type="FunFam" id="3.30.70.1660:FF:000004">
    <property type="entry name" value="Peptide chain release factor 1"/>
    <property type="match status" value="1"/>
</dbReference>
<dbReference type="Gene3D" id="3.30.160.20">
    <property type="match status" value="1"/>
</dbReference>
<dbReference type="Gene3D" id="3.30.70.1660">
    <property type="match status" value="2"/>
</dbReference>
<dbReference type="Gene3D" id="6.10.140.1950">
    <property type="match status" value="1"/>
</dbReference>
<dbReference type="HAMAP" id="MF_00093">
    <property type="entry name" value="Rel_fac_1"/>
    <property type="match status" value="1"/>
</dbReference>
<dbReference type="InterPro" id="IPR005139">
    <property type="entry name" value="PCRF"/>
</dbReference>
<dbReference type="InterPro" id="IPR000352">
    <property type="entry name" value="Pep_chain_release_fac_I"/>
</dbReference>
<dbReference type="InterPro" id="IPR045853">
    <property type="entry name" value="Pep_chain_release_fac_I_sf"/>
</dbReference>
<dbReference type="InterPro" id="IPR050057">
    <property type="entry name" value="Prokaryotic/Mito_RF"/>
</dbReference>
<dbReference type="InterPro" id="IPR004373">
    <property type="entry name" value="RF-1"/>
</dbReference>
<dbReference type="NCBIfam" id="TIGR00019">
    <property type="entry name" value="prfA"/>
    <property type="match status" value="1"/>
</dbReference>
<dbReference type="NCBIfam" id="NF001859">
    <property type="entry name" value="PRK00591.1"/>
    <property type="match status" value="1"/>
</dbReference>
<dbReference type="PANTHER" id="PTHR43804">
    <property type="entry name" value="LD18447P"/>
    <property type="match status" value="1"/>
</dbReference>
<dbReference type="PANTHER" id="PTHR43804:SF7">
    <property type="entry name" value="LD18447P"/>
    <property type="match status" value="1"/>
</dbReference>
<dbReference type="Pfam" id="PF03462">
    <property type="entry name" value="PCRF"/>
    <property type="match status" value="1"/>
</dbReference>
<dbReference type="Pfam" id="PF00472">
    <property type="entry name" value="RF-1"/>
    <property type="match status" value="1"/>
</dbReference>
<dbReference type="SMART" id="SM00937">
    <property type="entry name" value="PCRF"/>
    <property type="match status" value="1"/>
</dbReference>
<dbReference type="SUPFAM" id="SSF75620">
    <property type="entry name" value="Release factor"/>
    <property type="match status" value="1"/>
</dbReference>
<dbReference type="PROSITE" id="PS00745">
    <property type="entry name" value="RF_PROK_I"/>
    <property type="match status" value="1"/>
</dbReference>
<reference key="1">
    <citation type="submission" date="2006-12" db="EMBL/GenBank/DDBJ databases">
        <title>Complete sequence of chromosome 1 of Paracoccus denitrificans PD1222.</title>
        <authorList>
            <person name="Copeland A."/>
            <person name="Lucas S."/>
            <person name="Lapidus A."/>
            <person name="Barry K."/>
            <person name="Detter J.C."/>
            <person name="Glavina del Rio T."/>
            <person name="Hammon N."/>
            <person name="Israni S."/>
            <person name="Dalin E."/>
            <person name="Tice H."/>
            <person name="Pitluck S."/>
            <person name="Munk A.C."/>
            <person name="Brettin T."/>
            <person name="Bruce D."/>
            <person name="Han C."/>
            <person name="Tapia R."/>
            <person name="Gilna P."/>
            <person name="Schmutz J."/>
            <person name="Larimer F."/>
            <person name="Land M."/>
            <person name="Hauser L."/>
            <person name="Kyrpides N."/>
            <person name="Lykidis A."/>
            <person name="Spiro S."/>
            <person name="Richardson D.J."/>
            <person name="Moir J.W.B."/>
            <person name="Ferguson S.J."/>
            <person name="van Spanning R.J.M."/>
            <person name="Richardson P."/>
        </authorList>
    </citation>
    <scope>NUCLEOTIDE SEQUENCE [LARGE SCALE GENOMIC DNA]</scope>
    <source>
        <strain>Pd 1222</strain>
    </source>
</reference>
<gene>
    <name evidence="1" type="primary">prfA</name>
    <name type="ordered locus">Pden_0894</name>
</gene>
<sequence length="351" mass="38744">MLPEDRLIQIVERFEYLEARLNAGPAAEEIAAISREYAELKPVVAQIAQWRSVQEDIRQAQAMLADHEMRELAQDELSRLRAGLPALEHALRVALLPRDAADARPAILEIRPGTGGEEAALFAGDLLDMYRRFAESQGWQFQMLELVRSDLGGVREAMARIEGEGVFARLKYESGVHRVQRVPETESGGRIHTSAATVAVLPEAEEVDVDIPAADIRIDTMRASGAGGQHVNTTDSAVRITHLPTGIVVTSSEKSQHQNRANAMAVLRARLYDMERSRADAERAADRKSQVGSGDRSERIRTYNFPQGRMTDHRIGLTLYALDRIMQGEIGEIVEALAAHDQAARLAAQGE</sequence>
<proteinExistence type="inferred from homology"/>
<protein>
    <recommendedName>
        <fullName evidence="1">Peptide chain release factor 1</fullName>
        <shortName evidence="1">RF-1</shortName>
    </recommendedName>
</protein>
<name>RF1_PARDP</name>
<accession>A1B0G1</accession>
<feature type="chain" id="PRO_1000004927" description="Peptide chain release factor 1">
    <location>
        <begin position="1"/>
        <end position="351"/>
    </location>
</feature>
<feature type="region of interest" description="Disordered" evidence="2">
    <location>
        <begin position="279"/>
        <end position="300"/>
    </location>
</feature>
<feature type="modified residue" description="N5-methylglutamine" evidence="1">
    <location>
        <position position="229"/>
    </location>
</feature>